<keyword id="KW-0961">Cell wall biogenesis/degradation</keyword>
<keyword id="KW-0256">Endoplasmic reticulum</keyword>
<keyword id="KW-0325">Glycoprotein</keyword>
<keyword id="KW-0337">GPI-anchor biosynthesis</keyword>
<keyword id="KW-0472">Membrane</keyword>
<keyword id="KW-1185">Reference proteome</keyword>
<keyword id="KW-0808">Transferase</keyword>
<keyword id="KW-0812">Transmembrane</keyword>
<keyword id="KW-1133">Transmembrane helix</keyword>
<name>MCD4_NEUCR</name>
<evidence type="ECO:0000250" key="1"/>
<evidence type="ECO:0000255" key="2"/>
<evidence type="ECO:0000305" key="3"/>
<comment type="function">
    <text evidence="1">Ethanolamine phosphate transferase involved in glycosylphosphatidylinositol-anchor biosynthesis. Transfers ethanolamine phosphate to the first alpha-1,4-linked mannose of the glycosylphosphatidylinositol precursor of GPI-anchor (By similarity).</text>
</comment>
<comment type="pathway">
    <text>Glycolipid biosynthesis; glycosylphosphatidylinositol-anchor biosynthesis.</text>
</comment>
<comment type="subcellular location">
    <subcellularLocation>
        <location evidence="1">Endoplasmic reticulum membrane</location>
        <topology evidence="1">Multi-pass membrane protein</topology>
    </subcellularLocation>
</comment>
<comment type="similarity">
    <text evidence="3">Belongs to the PIGG/PIGN/PIGO family. PIGN subfamily.</text>
</comment>
<sequence>MAAFPRFRFLAIAVIFHFAYIFSIFDIYFVSPIETGMRLFNVQRPPNRSAPADRLVLFVGDGLRADKALQSHPEPYPKSDADLTPRPLAPYLRSKILEQGTFGVSHTRVPTESRPGHVALIAGLYEDVSAVTTGWKLNPVNFDSLFNRSRHTWSWGSPDILPMFEQGAVPGRVDAYTYGHEFEDFSSDATQLDLWVFDHVKDFFAEARRNKTLAEALRQDKIVFFLHLLGLDTTGHSYRPYSKEYLNNIKIVDQGVKEVAELFRDFYRDGRTAFVFTADHGMSDWGSHGDGHPDNTRTPLIVWGSGVAKPQLYPGEVAPGHDEYSADWNLDHVRRHDVAQADVAALMSYLVGVEFPANSVGELPLSYLAADIKEKAEASLVNVQGILEQYRVKEEKKKATELKYRPYQPFGENGLSPERRVAEIRQLIDAGRYEEAIEESAALMKVGLGGLRYLQTYDWLFLRALITIGYLGWIAYALTTVVDLHVLHGRVRPSRTLGGGLFFTSVLVALYASLVISKSPLTYYVYAFFPVFFWEEVYAHRESLAAGRKELLGHINSGGSVASFVLNSALYVGVIESLALGYIHREILSVLFVLGSFWPFTHGLSFLKKHGALSATWFLACIAMSTFTLLPAMKAENVNLITIGGVLMVVIGLLYLIFEDFVLADFSWNAKPTSRNHLSRSLVGIQVGLTVLSIIITRSSALSLQAKQGLPRGNQIMGWVTLVASLLMPLAYRLRPNNHYMHRILVIFLTCAPTFVILTISYEGLFYLVFSALLVSWVRLEHAVQKFTSSKAPQTAATKKPTTTTESHLPAPFRPLTLHDARVALFFFILLQSAFFSTGNVASVSSFSLDSVYRLIPIFDPFSQGAMLILKLMIPFALISANLGILNKRLGVAPSALFMVVMGISDILTLYFFWVVKDEGSWLEIGSTISHFVIASLLCVFVSALEPVSAAFIAGVEVGEESELKEEGKVAEKVVEKVNEAVEGLVSGGDGGGDES</sequence>
<accession>Q7SAP1</accession>
<feature type="chain" id="PRO_0000246210" description="GPI ethanolamine phosphate transferase 1">
    <location>
        <begin position="1"/>
        <end position="996"/>
    </location>
</feature>
<feature type="topological domain" description="Cytoplasmic" evidence="2">
    <location>
        <begin position="1"/>
        <end position="8"/>
    </location>
</feature>
<feature type="transmembrane region" description="Helical" evidence="2">
    <location>
        <begin position="9"/>
        <end position="29"/>
    </location>
</feature>
<feature type="topological domain" description="Lumenal" evidence="2">
    <location>
        <begin position="30"/>
        <end position="463"/>
    </location>
</feature>
<feature type="transmembrane region" description="Helical" evidence="2">
    <location>
        <begin position="464"/>
        <end position="484"/>
    </location>
</feature>
<feature type="topological domain" description="Cytoplasmic" evidence="2">
    <location>
        <begin position="485"/>
        <end position="495"/>
    </location>
</feature>
<feature type="transmembrane region" description="Helical" evidence="2">
    <location>
        <begin position="496"/>
        <end position="516"/>
    </location>
</feature>
<feature type="topological domain" description="Lumenal" evidence="2">
    <location>
        <begin position="517"/>
        <end position="518"/>
    </location>
</feature>
<feature type="transmembrane region" description="Helical" evidence="2">
    <location>
        <begin position="519"/>
        <end position="539"/>
    </location>
</feature>
<feature type="topological domain" description="Cytoplasmic" evidence="2">
    <location>
        <begin position="540"/>
        <end position="560"/>
    </location>
</feature>
<feature type="transmembrane region" description="Helical" evidence="2">
    <location>
        <begin position="561"/>
        <end position="581"/>
    </location>
</feature>
<feature type="topological domain" description="Lumenal" evidence="2">
    <location>
        <begin position="582"/>
        <end position="586"/>
    </location>
</feature>
<feature type="transmembrane region" description="Helical" evidence="2">
    <location>
        <begin position="587"/>
        <end position="607"/>
    </location>
</feature>
<feature type="topological domain" description="Cytoplasmic" evidence="2">
    <location>
        <begin position="608"/>
        <end position="612"/>
    </location>
</feature>
<feature type="transmembrane region" description="Helical" evidence="2">
    <location>
        <begin position="613"/>
        <end position="633"/>
    </location>
</feature>
<feature type="topological domain" description="Lumenal" evidence="2">
    <location>
        <begin position="634"/>
        <end position="637"/>
    </location>
</feature>
<feature type="transmembrane region" description="Helical" evidence="2">
    <location>
        <begin position="638"/>
        <end position="658"/>
    </location>
</feature>
<feature type="topological domain" description="Cytoplasmic" evidence="2">
    <location>
        <begin position="659"/>
        <end position="681"/>
    </location>
</feature>
<feature type="transmembrane region" description="Helical" evidence="2">
    <location>
        <begin position="682"/>
        <end position="702"/>
    </location>
</feature>
<feature type="topological domain" description="Lumenal" evidence="2">
    <location>
        <begin position="703"/>
        <end position="715"/>
    </location>
</feature>
<feature type="transmembrane region" description="Helical" evidence="2">
    <location>
        <begin position="716"/>
        <end position="734"/>
    </location>
</feature>
<feature type="topological domain" description="Cytoplasmic" evidence="2">
    <location>
        <begin position="735"/>
        <end position="754"/>
    </location>
</feature>
<feature type="transmembrane region" description="Helical" evidence="2">
    <location>
        <begin position="755"/>
        <end position="775"/>
    </location>
</feature>
<feature type="topological domain" description="Lumenal" evidence="2">
    <location>
        <begin position="776"/>
        <end position="822"/>
    </location>
</feature>
<feature type="transmembrane region" description="Helical" evidence="2">
    <location>
        <begin position="823"/>
        <end position="843"/>
    </location>
</feature>
<feature type="topological domain" description="Cytoplasmic" evidence="2">
    <location>
        <begin position="844"/>
        <end position="865"/>
    </location>
</feature>
<feature type="transmembrane region" description="Helical" evidence="2">
    <location>
        <begin position="866"/>
        <end position="886"/>
    </location>
</feature>
<feature type="topological domain" description="Lumenal" evidence="2">
    <location>
        <begin position="887"/>
        <end position="895"/>
    </location>
</feature>
<feature type="transmembrane region" description="Helical" evidence="2">
    <location>
        <begin position="896"/>
        <end position="916"/>
    </location>
</feature>
<feature type="topological domain" description="Cytoplasmic" evidence="2">
    <location>
        <begin position="917"/>
        <end position="932"/>
    </location>
</feature>
<feature type="transmembrane region" description="Helical" evidence="2">
    <location>
        <begin position="933"/>
        <end position="953"/>
    </location>
</feature>
<feature type="topological domain" description="Lumenal" evidence="2">
    <location>
        <begin position="954"/>
        <end position="996"/>
    </location>
</feature>
<feature type="glycosylation site" description="N-linked (GlcNAc...) asparagine" evidence="2">
    <location>
        <position position="47"/>
    </location>
</feature>
<feature type="glycosylation site" description="N-linked (GlcNAc...) asparagine" evidence="2">
    <location>
        <position position="147"/>
    </location>
</feature>
<feature type="glycosylation site" description="N-linked (GlcNAc...) asparagine" evidence="2">
    <location>
        <position position="210"/>
    </location>
</feature>
<organism>
    <name type="scientific">Neurospora crassa (strain ATCC 24698 / 74-OR23-1A / CBS 708.71 / DSM 1257 / FGSC 987)</name>
    <dbReference type="NCBI Taxonomy" id="367110"/>
    <lineage>
        <taxon>Eukaryota</taxon>
        <taxon>Fungi</taxon>
        <taxon>Dikarya</taxon>
        <taxon>Ascomycota</taxon>
        <taxon>Pezizomycotina</taxon>
        <taxon>Sordariomycetes</taxon>
        <taxon>Sordariomycetidae</taxon>
        <taxon>Sordariales</taxon>
        <taxon>Sordariaceae</taxon>
        <taxon>Neurospora</taxon>
    </lineage>
</organism>
<dbReference type="EC" id="2.-.-.-"/>
<dbReference type="EMBL" id="BX897674">
    <property type="protein sequence ID" value="CAE85530.1"/>
    <property type="molecule type" value="Genomic_DNA"/>
</dbReference>
<dbReference type="EMBL" id="CM002239">
    <property type="protein sequence ID" value="EAA33433.1"/>
    <property type="molecule type" value="Genomic_DNA"/>
</dbReference>
<dbReference type="SMR" id="Q7SAP1"/>
<dbReference type="FunCoup" id="Q7SAP1">
    <property type="interactions" value="460"/>
</dbReference>
<dbReference type="STRING" id="367110.Q7SAP1"/>
<dbReference type="GlyCosmos" id="Q7SAP1">
    <property type="glycosylation" value="3 sites, No reported glycans"/>
</dbReference>
<dbReference type="PaxDb" id="5141-EFNCRP00000008276"/>
<dbReference type="EnsemblFungi" id="EAA33433">
    <property type="protein sequence ID" value="EAA33433"/>
    <property type="gene ID" value="NCU07999"/>
</dbReference>
<dbReference type="KEGG" id="ncr:NCU07999"/>
<dbReference type="VEuPathDB" id="FungiDB:NCU07999"/>
<dbReference type="HOGENOM" id="CLU_007676_0_0_1"/>
<dbReference type="InParanoid" id="Q7SAP1"/>
<dbReference type="OMA" id="QSYFHRE"/>
<dbReference type="OrthoDB" id="2748310at2759"/>
<dbReference type="UniPathway" id="UPA00196"/>
<dbReference type="Proteomes" id="UP000001805">
    <property type="component" value="Chromosome 4, Linkage Group IV"/>
</dbReference>
<dbReference type="GO" id="GO:0005789">
    <property type="term" value="C:endoplasmic reticulum membrane"/>
    <property type="evidence" value="ECO:0000318"/>
    <property type="project" value="GO_Central"/>
</dbReference>
<dbReference type="GO" id="GO:0051377">
    <property type="term" value="F:mannose-ethanolamine phosphotransferase activity"/>
    <property type="evidence" value="ECO:0000318"/>
    <property type="project" value="GO_Central"/>
</dbReference>
<dbReference type="GO" id="GO:0071555">
    <property type="term" value="P:cell wall organization"/>
    <property type="evidence" value="ECO:0007669"/>
    <property type="project" value="UniProtKB-KW"/>
</dbReference>
<dbReference type="GO" id="GO:0006506">
    <property type="term" value="P:GPI anchor biosynthetic process"/>
    <property type="evidence" value="ECO:0000318"/>
    <property type="project" value="GO_Central"/>
</dbReference>
<dbReference type="CDD" id="cd16020">
    <property type="entry name" value="GPI_EPT_1"/>
    <property type="match status" value="1"/>
</dbReference>
<dbReference type="FunFam" id="3.40.720.10:FF:000015">
    <property type="entry name" value="GPI ethanolamine phosphate transferase 1"/>
    <property type="match status" value="1"/>
</dbReference>
<dbReference type="Gene3D" id="3.40.720.10">
    <property type="entry name" value="Alkaline Phosphatase, subunit A"/>
    <property type="match status" value="1"/>
</dbReference>
<dbReference type="InterPro" id="IPR017850">
    <property type="entry name" value="Alkaline_phosphatase_core_sf"/>
</dbReference>
<dbReference type="InterPro" id="IPR007070">
    <property type="entry name" value="GPI_EtnP_transferase_1"/>
</dbReference>
<dbReference type="InterPro" id="IPR017852">
    <property type="entry name" value="GPI_EtnP_transferase_1_C"/>
</dbReference>
<dbReference type="InterPro" id="IPR037671">
    <property type="entry name" value="PIGN_N"/>
</dbReference>
<dbReference type="InterPro" id="IPR000917">
    <property type="entry name" value="Sulfatase_N"/>
</dbReference>
<dbReference type="PANTHER" id="PTHR12250:SF0">
    <property type="entry name" value="GPI ETHANOLAMINE PHOSPHATE TRANSFERASE 1"/>
    <property type="match status" value="1"/>
</dbReference>
<dbReference type="PANTHER" id="PTHR12250">
    <property type="entry name" value="PHOSPHATIDYLINOSITOL GLYCAN, CLASS N"/>
    <property type="match status" value="1"/>
</dbReference>
<dbReference type="Pfam" id="PF04987">
    <property type="entry name" value="PigN"/>
    <property type="match status" value="1"/>
</dbReference>
<dbReference type="Pfam" id="PF00884">
    <property type="entry name" value="Sulfatase"/>
    <property type="match status" value="1"/>
</dbReference>
<dbReference type="SUPFAM" id="SSF53649">
    <property type="entry name" value="Alkaline phosphatase-like"/>
    <property type="match status" value="1"/>
</dbReference>
<reference key="1">
    <citation type="journal article" date="2003" name="Nucleic Acids Res.">
        <title>What's in the genome of a filamentous fungus? Analysis of the Neurospora genome sequence.</title>
        <authorList>
            <person name="Mannhaupt G."/>
            <person name="Montrone C."/>
            <person name="Haase D."/>
            <person name="Mewes H.-W."/>
            <person name="Aign V."/>
            <person name="Hoheisel J.D."/>
            <person name="Fartmann B."/>
            <person name="Nyakatura G."/>
            <person name="Kempken F."/>
            <person name="Maier J."/>
            <person name="Schulte U."/>
        </authorList>
    </citation>
    <scope>NUCLEOTIDE SEQUENCE [LARGE SCALE GENOMIC DNA]</scope>
    <source>
        <strain>ATCC 24698 / 74-OR23-1A / CBS 708.71 / DSM 1257 / FGSC 987</strain>
    </source>
</reference>
<reference key="2">
    <citation type="journal article" date="2003" name="Nature">
        <title>The genome sequence of the filamentous fungus Neurospora crassa.</title>
        <authorList>
            <person name="Galagan J.E."/>
            <person name="Calvo S.E."/>
            <person name="Borkovich K.A."/>
            <person name="Selker E.U."/>
            <person name="Read N.D."/>
            <person name="Jaffe D.B."/>
            <person name="FitzHugh W."/>
            <person name="Ma L.-J."/>
            <person name="Smirnov S."/>
            <person name="Purcell S."/>
            <person name="Rehman B."/>
            <person name="Elkins T."/>
            <person name="Engels R."/>
            <person name="Wang S."/>
            <person name="Nielsen C.B."/>
            <person name="Butler J."/>
            <person name="Endrizzi M."/>
            <person name="Qui D."/>
            <person name="Ianakiev P."/>
            <person name="Bell-Pedersen D."/>
            <person name="Nelson M.A."/>
            <person name="Werner-Washburne M."/>
            <person name="Selitrennikoff C.P."/>
            <person name="Kinsey J.A."/>
            <person name="Braun E.L."/>
            <person name="Zelter A."/>
            <person name="Schulte U."/>
            <person name="Kothe G.O."/>
            <person name="Jedd G."/>
            <person name="Mewes H.-W."/>
            <person name="Staben C."/>
            <person name="Marcotte E."/>
            <person name="Greenberg D."/>
            <person name="Roy A."/>
            <person name="Foley K."/>
            <person name="Naylor J."/>
            <person name="Stange-Thomann N."/>
            <person name="Barrett R."/>
            <person name="Gnerre S."/>
            <person name="Kamal M."/>
            <person name="Kamvysselis M."/>
            <person name="Mauceli E.W."/>
            <person name="Bielke C."/>
            <person name="Rudd S."/>
            <person name="Frishman D."/>
            <person name="Krystofova S."/>
            <person name="Rasmussen C."/>
            <person name="Metzenberg R.L."/>
            <person name="Perkins D.D."/>
            <person name="Kroken S."/>
            <person name="Cogoni C."/>
            <person name="Macino G."/>
            <person name="Catcheside D.E.A."/>
            <person name="Li W."/>
            <person name="Pratt R.J."/>
            <person name="Osmani S.A."/>
            <person name="DeSouza C.P.C."/>
            <person name="Glass N.L."/>
            <person name="Orbach M.J."/>
            <person name="Berglund J.A."/>
            <person name="Voelker R."/>
            <person name="Yarden O."/>
            <person name="Plamann M."/>
            <person name="Seiler S."/>
            <person name="Dunlap J.C."/>
            <person name="Radford A."/>
            <person name="Aramayo R."/>
            <person name="Natvig D.O."/>
            <person name="Alex L.A."/>
            <person name="Mannhaupt G."/>
            <person name="Ebbole D.J."/>
            <person name="Freitag M."/>
            <person name="Paulsen I."/>
            <person name="Sachs M.S."/>
            <person name="Lander E.S."/>
            <person name="Nusbaum C."/>
            <person name="Birren B.W."/>
        </authorList>
    </citation>
    <scope>NUCLEOTIDE SEQUENCE [LARGE SCALE GENOMIC DNA]</scope>
    <source>
        <strain>ATCC 24698 / 74-OR23-1A / CBS 708.71 / DSM 1257 / FGSC 987</strain>
    </source>
</reference>
<proteinExistence type="inferred from homology"/>
<protein>
    <recommendedName>
        <fullName>GPI ethanolamine phosphate transferase 1</fullName>
        <ecNumber>2.-.-.-</ecNumber>
    </recommendedName>
</protein>
<gene>
    <name type="primary">mcd-4</name>
    <name type="ORF">B2N18.290</name>
    <name type="ORF">NCU07999</name>
</gene>